<organism>
    <name type="scientific">Synechococcus sp. (strain CC9605)</name>
    <dbReference type="NCBI Taxonomy" id="110662"/>
    <lineage>
        <taxon>Bacteria</taxon>
        <taxon>Bacillati</taxon>
        <taxon>Cyanobacteriota</taxon>
        <taxon>Cyanophyceae</taxon>
        <taxon>Synechococcales</taxon>
        <taxon>Synechococcaceae</taxon>
        <taxon>Synechococcus</taxon>
    </lineage>
</organism>
<gene>
    <name evidence="1" type="primary">pyrC</name>
    <name type="ordered locus">Syncc9605_0986</name>
</gene>
<proteinExistence type="inferred from homology"/>
<accession>Q3AKY8</accession>
<reference key="1">
    <citation type="submission" date="2005-07" db="EMBL/GenBank/DDBJ databases">
        <title>Complete sequence of Synechococcus sp. CC9605.</title>
        <authorList>
            <consortium name="US DOE Joint Genome Institute"/>
            <person name="Copeland A."/>
            <person name="Lucas S."/>
            <person name="Lapidus A."/>
            <person name="Barry K."/>
            <person name="Detter J.C."/>
            <person name="Glavina T."/>
            <person name="Hammon N."/>
            <person name="Israni S."/>
            <person name="Pitluck S."/>
            <person name="Schmutz J."/>
            <person name="Martinez M."/>
            <person name="Larimer F."/>
            <person name="Land M."/>
            <person name="Kyrpides N."/>
            <person name="Ivanova N."/>
            <person name="Richardson P."/>
        </authorList>
    </citation>
    <scope>NUCLEOTIDE SEQUENCE [LARGE SCALE GENOMIC DNA]</scope>
    <source>
        <strain>CC9605</strain>
    </source>
</reference>
<keyword id="KW-0378">Hydrolase</keyword>
<keyword id="KW-0479">Metal-binding</keyword>
<keyword id="KW-0665">Pyrimidine biosynthesis</keyword>
<keyword id="KW-0862">Zinc</keyword>
<feature type="chain" id="PRO_1000024070" description="Dihydroorotase">
    <location>
        <begin position="1"/>
        <end position="348"/>
    </location>
</feature>
<feature type="active site" evidence="1">
    <location>
        <position position="248"/>
    </location>
</feature>
<feature type="binding site" evidence="1">
    <location>
        <position position="14"/>
    </location>
    <ligand>
        <name>Zn(2+)</name>
        <dbReference type="ChEBI" id="CHEBI:29105"/>
        <label>1</label>
    </ligand>
</feature>
<feature type="binding site" evidence="1">
    <location>
        <begin position="16"/>
        <end position="18"/>
    </location>
    <ligand>
        <name>substrate</name>
    </ligand>
</feature>
<feature type="binding site" evidence="1">
    <location>
        <position position="16"/>
    </location>
    <ligand>
        <name>Zn(2+)</name>
        <dbReference type="ChEBI" id="CHEBI:29105"/>
        <label>1</label>
    </ligand>
</feature>
<feature type="binding site" evidence="1">
    <location>
        <position position="42"/>
    </location>
    <ligand>
        <name>substrate</name>
    </ligand>
</feature>
<feature type="binding site" description="via carbamate group" evidence="1">
    <location>
        <position position="100"/>
    </location>
    <ligand>
        <name>Zn(2+)</name>
        <dbReference type="ChEBI" id="CHEBI:29105"/>
        <label>1</label>
    </ligand>
</feature>
<feature type="binding site" description="via carbamate group" evidence="1">
    <location>
        <position position="100"/>
    </location>
    <ligand>
        <name>Zn(2+)</name>
        <dbReference type="ChEBI" id="CHEBI:29105"/>
        <label>2</label>
    </ligand>
</feature>
<feature type="binding site" evidence="1">
    <location>
        <position position="137"/>
    </location>
    <ligand>
        <name>substrate</name>
    </ligand>
</feature>
<feature type="binding site" evidence="1">
    <location>
        <position position="137"/>
    </location>
    <ligand>
        <name>Zn(2+)</name>
        <dbReference type="ChEBI" id="CHEBI:29105"/>
        <label>2</label>
    </ligand>
</feature>
<feature type="binding site" evidence="1">
    <location>
        <position position="175"/>
    </location>
    <ligand>
        <name>Zn(2+)</name>
        <dbReference type="ChEBI" id="CHEBI:29105"/>
        <label>2</label>
    </ligand>
</feature>
<feature type="binding site" evidence="1">
    <location>
        <position position="220"/>
    </location>
    <ligand>
        <name>substrate</name>
    </ligand>
</feature>
<feature type="binding site" evidence="1">
    <location>
        <position position="248"/>
    </location>
    <ligand>
        <name>Zn(2+)</name>
        <dbReference type="ChEBI" id="CHEBI:29105"/>
        <label>1</label>
    </ligand>
</feature>
<feature type="binding site" evidence="1">
    <location>
        <position position="252"/>
    </location>
    <ligand>
        <name>substrate</name>
    </ligand>
</feature>
<feature type="binding site" evidence="1">
    <location>
        <position position="264"/>
    </location>
    <ligand>
        <name>substrate</name>
    </ligand>
</feature>
<feature type="modified residue" description="N6-carboxylysine" evidence="1">
    <location>
        <position position="100"/>
    </location>
</feature>
<evidence type="ECO:0000255" key="1">
    <source>
        <dbReference type="HAMAP-Rule" id="MF_00219"/>
    </source>
</evidence>
<name>PYRC_SYNSC</name>
<comment type="function">
    <text evidence="1">Catalyzes the reversible cyclization of carbamoyl aspartate to dihydroorotate.</text>
</comment>
<comment type="catalytic activity">
    <reaction evidence="1">
        <text>(S)-dihydroorotate + H2O = N-carbamoyl-L-aspartate + H(+)</text>
        <dbReference type="Rhea" id="RHEA:24296"/>
        <dbReference type="ChEBI" id="CHEBI:15377"/>
        <dbReference type="ChEBI" id="CHEBI:15378"/>
        <dbReference type="ChEBI" id="CHEBI:30864"/>
        <dbReference type="ChEBI" id="CHEBI:32814"/>
        <dbReference type="EC" id="3.5.2.3"/>
    </reaction>
</comment>
<comment type="cofactor">
    <cofactor evidence="1">
        <name>Zn(2+)</name>
        <dbReference type="ChEBI" id="CHEBI:29105"/>
    </cofactor>
    <text evidence="1">Binds 2 Zn(2+) ions per subunit.</text>
</comment>
<comment type="pathway">
    <text evidence="1">Pyrimidine metabolism; UMP biosynthesis via de novo pathway; (S)-dihydroorotate from bicarbonate: step 3/3.</text>
</comment>
<comment type="subunit">
    <text evidence="1">Homodimer.</text>
</comment>
<comment type="similarity">
    <text evidence="1">Belongs to the metallo-dependent hydrolases superfamily. DHOase family. Class II DHOase subfamily.</text>
</comment>
<dbReference type="EC" id="3.5.2.3" evidence="1"/>
<dbReference type="EMBL" id="CP000110">
    <property type="protein sequence ID" value="ABB34744.1"/>
    <property type="molecule type" value="Genomic_DNA"/>
</dbReference>
<dbReference type="RefSeq" id="WP_011363968.1">
    <property type="nucleotide sequence ID" value="NC_007516.1"/>
</dbReference>
<dbReference type="SMR" id="Q3AKY8"/>
<dbReference type="STRING" id="110662.Syncc9605_0986"/>
<dbReference type="KEGG" id="syd:Syncc9605_0986"/>
<dbReference type="eggNOG" id="COG0418">
    <property type="taxonomic scope" value="Bacteria"/>
</dbReference>
<dbReference type="HOGENOM" id="CLU_041558_1_0_3"/>
<dbReference type="OrthoDB" id="9808095at2"/>
<dbReference type="UniPathway" id="UPA00070">
    <property type="reaction ID" value="UER00117"/>
</dbReference>
<dbReference type="GO" id="GO:0005829">
    <property type="term" value="C:cytosol"/>
    <property type="evidence" value="ECO:0007669"/>
    <property type="project" value="TreeGrafter"/>
</dbReference>
<dbReference type="GO" id="GO:0004151">
    <property type="term" value="F:dihydroorotase activity"/>
    <property type="evidence" value="ECO:0007669"/>
    <property type="project" value="UniProtKB-UniRule"/>
</dbReference>
<dbReference type="GO" id="GO:0008270">
    <property type="term" value="F:zinc ion binding"/>
    <property type="evidence" value="ECO:0007669"/>
    <property type="project" value="UniProtKB-UniRule"/>
</dbReference>
<dbReference type="GO" id="GO:0006207">
    <property type="term" value="P:'de novo' pyrimidine nucleobase biosynthetic process"/>
    <property type="evidence" value="ECO:0007669"/>
    <property type="project" value="TreeGrafter"/>
</dbReference>
<dbReference type="GO" id="GO:0044205">
    <property type="term" value="P:'de novo' UMP biosynthetic process"/>
    <property type="evidence" value="ECO:0007669"/>
    <property type="project" value="UniProtKB-UniRule"/>
</dbReference>
<dbReference type="CDD" id="cd01294">
    <property type="entry name" value="DHOase"/>
    <property type="match status" value="1"/>
</dbReference>
<dbReference type="Gene3D" id="3.20.20.140">
    <property type="entry name" value="Metal-dependent hydrolases"/>
    <property type="match status" value="1"/>
</dbReference>
<dbReference type="HAMAP" id="MF_00219">
    <property type="entry name" value="PyrC_classII"/>
    <property type="match status" value="1"/>
</dbReference>
<dbReference type="InterPro" id="IPR006680">
    <property type="entry name" value="Amidohydro-rel"/>
</dbReference>
<dbReference type="InterPro" id="IPR004721">
    <property type="entry name" value="DHOdimr"/>
</dbReference>
<dbReference type="InterPro" id="IPR002195">
    <property type="entry name" value="Dihydroorotase_CS"/>
</dbReference>
<dbReference type="InterPro" id="IPR032466">
    <property type="entry name" value="Metal_Hydrolase"/>
</dbReference>
<dbReference type="NCBIfam" id="TIGR00856">
    <property type="entry name" value="pyrC_dimer"/>
    <property type="match status" value="1"/>
</dbReference>
<dbReference type="PANTHER" id="PTHR43137">
    <property type="entry name" value="DIHYDROOROTASE"/>
    <property type="match status" value="1"/>
</dbReference>
<dbReference type="PANTHER" id="PTHR43137:SF1">
    <property type="entry name" value="DIHYDROOROTASE"/>
    <property type="match status" value="1"/>
</dbReference>
<dbReference type="Pfam" id="PF01979">
    <property type="entry name" value="Amidohydro_1"/>
    <property type="match status" value="1"/>
</dbReference>
<dbReference type="PIRSF" id="PIRSF001237">
    <property type="entry name" value="DHOdimr"/>
    <property type="match status" value="1"/>
</dbReference>
<dbReference type="SUPFAM" id="SSF51556">
    <property type="entry name" value="Metallo-dependent hydrolases"/>
    <property type="match status" value="1"/>
</dbReference>
<dbReference type="PROSITE" id="PS00482">
    <property type="entry name" value="DIHYDROOROTASE_1"/>
    <property type="match status" value="1"/>
</dbReference>
<dbReference type="PROSITE" id="PS00483">
    <property type="entry name" value="DIHYDROOROTASE_2"/>
    <property type="match status" value="1"/>
</dbReference>
<protein>
    <recommendedName>
        <fullName evidence="1">Dihydroorotase</fullName>
        <shortName evidence="1">DHOase</shortName>
        <ecNumber evidence="1">3.5.2.3</ecNumber>
    </recommendedName>
</protein>
<sequence length="348" mass="38466">MSDQISIIAPDDWHVHLRDGEMLNQVVAHTARRFQRAIVMPNLRPPVTTVAAAQAYRDRIQAACPADLEFTPLMTAYLTDSIAPAELETGFREGVFAAAKLYPANATTNSAAGVTDLLQIDPVLETMARIGMPLLIHGEVTDPEIDIFDREAAFIERHLEPLRERHPELKVVLEHITTEQAVQYVSSADRHLAATITPHHLHINRNAMFAGGLRSDFYCLPVAKRECHRQALRRAATSGDPSFFLGTDTAPHERSSKESACGCAGIFNAPFALESYAQVFDQEGALEHFEAFTSLNGPAFYKLPANTHRITLQRRDHLVPELVNGLVPFHAGEILSWAVANAPDQVQL</sequence>